<organism>
    <name type="scientific">Blochmanniella pennsylvanica (strain BPEN)</name>
    <dbReference type="NCBI Taxonomy" id="291272"/>
    <lineage>
        <taxon>Bacteria</taxon>
        <taxon>Pseudomonadati</taxon>
        <taxon>Pseudomonadota</taxon>
        <taxon>Gammaproteobacteria</taxon>
        <taxon>Enterobacterales</taxon>
        <taxon>Enterobacteriaceae</taxon>
        <taxon>ant endosymbionts</taxon>
        <taxon>Candidatus Blochmanniella</taxon>
    </lineage>
</organism>
<gene>
    <name evidence="1" type="primary">rplS</name>
    <name type="ordered locus">BPEN_182</name>
</gene>
<name>RL19_BLOPB</name>
<proteinExistence type="inferred from homology"/>
<feature type="chain" id="PRO_0000226831" description="Large ribosomal subunit protein bL19">
    <location>
        <begin position="1"/>
        <end position="116"/>
    </location>
</feature>
<accession>Q493M0</accession>
<evidence type="ECO:0000255" key="1">
    <source>
        <dbReference type="HAMAP-Rule" id="MF_00402"/>
    </source>
</evidence>
<evidence type="ECO:0000305" key="2"/>
<dbReference type="EMBL" id="CP000016">
    <property type="protein sequence ID" value="AAZ40820.1"/>
    <property type="molecule type" value="Genomic_DNA"/>
</dbReference>
<dbReference type="RefSeq" id="WP_011282727.1">
    <property type="nucleotide sequence ID" value="NC_007292.1"/>
</dbReference>
<dbReference type="SMR" id="Q493M0"/>
<dbReference type="STRING" id="291272.BPEN_182"/>
<dbReference type="KEGG" id="bpn:BPEN_182"/>
<dbReference type="eggNOG" id="COG0335">
    <property type="taxonomic scope" value="Bacteria"/>
</dbReference>
<dbReference type="HOGENOM" id="CLU_103507_2_2_6"/>
<dbReference type="OrthoDB" id="9803541at2"/>
<dbReference type="Proteomes" id="UP000007794">
    <property type="component" value="Chromosome"/>
</dbReference>
<dbReference type="GO" id="GO:0022625">
    <property type="term" value="C:cytosolic large ribosomal subunit"/>
    <property type="evidence" value="ECO:0007669"/>
    <property type="project" value="TreeGrafter"/>
</dbReference>
<dbReference type="GO" id="GO:0003735">
    <property type="term" value="F:structural constituent of ribosome"/>
    <property type="evidence" value="ECO:0007669"/>
    <property type="project" value="InterPro"/>
</dbReference>
<dbReference type="GO" id="GO:0006412">
    <property type="term" value="P:translation"/>
    <property type="evidence" value="ECO:0007669"/>
    <property type="project" value="UniProtKB-UniRule"/>
</dbReference>
<dbReference type="FunFam" id="2.30.30.790:FF:000001">
    <property type="entry name" value="50S ribosomal protein L19"/>
    <property type="match status" value="1"/>
</dbReference>
<dbReference type="Gene3D" id="2.30.30.790">
    <property type="match status" value="1"/>
</dbReference>
<dbReference type="HAMAP" id="MF_00402">
    <property type="entry name" value="Ribosomal_bL19"/>
    <property type="match status" value="1"/>
</dbReference>
<dbReference type="InterPro" id="IPR001857">
    <property type="entry name" value="Ribosomal_bL19"/>
</dbReference>
<dbReference type="InterPro" id="IPR018257">
    <property type="entry name" value="Ribosomal_bL19_CS"/>
</dbReference>
<dbReference type="InterPro" id="IPR038657">
    <property type="entry name" value="Ribosomal_bL19_sf"/>
</dbReference>
<dbReference type="InterPro" id="IPR008991">
    <property type="entry name" value="Translation_prot_SH3-like_sf"/>
</dbReference>
<dbReference type="NCBIfam" id="TIGR01024">
    <property type="entry name" value="rplS_bact"/>
    <property type="match status" value="1"/>
</dbReference>
<dbReference type="PANTHER" id="PTHR15680:SF9">
    <property type="entry name" value="LARGE RIBOSOMAL SUBUNIT PROTEIN BL19M"/>
    <property type="match status" value="1"/>
</dbReference>
<dbReference type="PANTHER" id="PTHR15680">
    <property type="entry name" value="RIBOSOMAL PROTEIN L19"/>
    <property type="match status" value="1"/>
</dbReference>
<dbReference type="Pfam" id="PF01245">
    <property type="entry name" value="Ribosomal_L19"/>
    <property type="match status" value="1"/>
</dbReference>
<dbReference type="PIRSF" id="PIRSF002191">
    <property type="entry name" value="Ribosomal_L19"/>
    <property type="match status" value="1"/>
</dbReference>
<dbReference type="PRINTS" id="PR00061">
    <property type="entry name" value="RIBOSOMALL19"/>
</dbReference>
<dbReference type="SUPFAM" id="SSF50104">
    <property type="entry name" value="Translation proteins SH3-like domain"/>
    <property type="match status" value="1"/>
</dbReference>
<dbReference type="PROSITE" id="PS01015">
    <property type="entry name" value="RIBOSOMAL_L19"/>
    <property type="match status" value="1"/>
</dbReference>
<protein>
    <recommendedName>
        <fullName evidence="1">Large ribosomal subunit protein bL19</fullName>
    </recommendedName>
    <alternativeName>
        <fullName evidence="2">50S ribosomal protein L19</fullName>
    </alternativeName>
</protein>
<comment type="function">
    <text evidence="1">This protein is located at the 30S-50S ribosomal subunit interface and may play a role in the structure and function of the aminoacyl-tRNA binding site.</text>
</comment>
<comment type="similarity">
    <text evidence="1">Belongs to the bacterial ribosomal protein bL19 family.</text>
</comment>
<keyword id="KW-1185">Reference proteome</keyword>
<keyword id="KW-0687">Ribonucleoprotein</keyword>
<keyword id="KW-0689">Ribosomal protein</keyword>
<sequence length="116" mass="13433">MYELINNFEKKQMKKNIPHLHPGDTVEVKTWVIEGSKKRLQIFEGVVISIKNRGLHSAFTVRKISSGEGVERVFQSHSPVIEEIKIKRFGIVRRAKLYYLRSLSGKSARIKVRMNP</sequence>
<reference key="1">
    <citation type="journal article" date="2005" name="Genome Res.">
        <title>Genome sequence of Blochmannia pennsylvanicus indicates parallel evolutionary trends among bacterial mutualists of insects.</title>
        <authorList>
            <person name="Degnan P.H."/>
            <person name="Lazarus A.B."/>
            <person name="Wernegreen J.J."/>
        </authorList>
    </citation>
    <scope>NUCLEOTIDE SEQUENCE [LARGE SCALE GENOMIC DNA]</scope>
    <source>
        <strain>BPEN</strain>
    </source>
</reference>